<gene>
    <name type="primary">padG</name>
</gene>
<name>PADG_AROEV</name>
<proteinExistence type="evidence at protein level"/>
<comment type="function">
    <text evidence="1">Involved in the anaerobic metabolism of phenylalanine and phenylacetate. Catalyzes the oxidative decarboxylation of phenylglyoxylate to benzoyl-CoA and CO(2). It can also react slowly with 2-oxo-3-methylbutanoate and use different electron acceptors such as benzyl viologen, methyl viologen, FAD or FMN, but NAD seems to be the physiological electron acceptor. Also catalyzes an isotope exchange between CO(2) and the carboxyl group which proves partial or complete reversibility of the oxidative decarboxylation reaction.</text>
</comment>
<comment type="catalytic activity">
    <reaction evidence="1">
        <text>phenylglyoxylate + NAD(+) + CoA = benzoyl-CoA + CO2 + NADH</text>
        <dbReference type="Rhea" id="RHEA:10372"/>
        <dbReference type="ChEBI" id="CHEBI:16526"/>
        <dbReference type="ChEBI" id="CHEBI:36656"/>
        <dbReference type="ChEBI" id="CHEBI:57287"/>
        <dbReference type="ChEBI" id="CHEBI:57369"/>
        <dbReference type="ChEBI" id="CHEBI:57540"/>
        <dbReference type="ChEBI" id="CHEBI:57945"/>
        <dbReference type="EC" id="1.2.1.58"/>
    </reaction>
</comment>
<comment type="activity regulation">
    <text evidence="1">Activated by magnesium ions and thiamine diphosphate.</text>
</comment>
<comment type="biophysicochemical properties">
    <kinetics>
        <KM evidence="1">45 uM for phenylglyoxylate (under anaerobic conditions at 37 degrees Celsius and pH 7.8)</KM>
        <KM evidence="1">55 uM for coenzyme-A (under anaerobic conditions at 37 degrees Celsius and pH 7.8)</KM>
        <KM evidence="1">74 uM for NAD (under anaerobic conditions at 37 degrees Celsius and pH 7.8)</KM>
    </kinetics>
    <phDependence>
        <text evidence="1">Optimum pH is 8 when measured with benzyl viologen. Half-maximal activities are obtained at pH 9 and pH 6.8.</text>
    </phDependence>
</comment>
<comment type="subunit">
    <text evidence="1">Dimer of heteropentamers composed of an alpha (PadG), a beta (PadI), a gamma (PadE), a delta (PadF) and an epsilon (PadH) subunit.</text>
</comment>
<comment type="induction">
    <text evidence="1">Induced anaerobically by phenylalanine, phenylacetate or phenylglyoxylate.</text>
</comment>
<keyword id="KW-0903">Direct protein sequencing</keyword>
<keyword id="KW-0520">NAD</keyword>
<keyword id="KW-0560">Oxidoreductase</keyword>
<protein>
    <recommendedName>
        <fullName>NADH-dependent phenylglyoxylate dehydrogenase subunit alpha</fullName>
        <ecNumber>1.2.1.58</ecNumber>
    </recommendedName>
    <alternativeName>
        <fullName>Phenylglyoxylate:NAD oxidoreductase</fullName>
    </alternativeName>
    <alternativeName>
        <fullName>Phenylglyoxylate:acceptor oxidoreductase</fullName>
    </alternativeName>
</protein>
<feature type="chain" id="PRO_0000418535" description="NADH-dependent phenylglyoxylate dehydrogenase subunit alpha">
    <location>
        <begin position="1"/>
        <end position="417"/>
    </location>
</feature>
<reference key="1">
    <citation type="submission" date="2002-01" db="EMBL/GenBank/DDBJ databases">
        <title>Characterization of genes involved in anaerobic phenylacetate degradation in Azoarcus evansii.</title>
        <authorList>
            <person name="Haas S."/>
            <person name="Hammer E."/>
            <person name="Herrmann H."/>
            <person name="Burchhardt G."/>
        </authorList>
    </citation>
    <scope>NUCLEOTIDE SEQUENCE [GENOMIC DNA]</scope>
    <source>
        <strain>DSM 6898 / NBRC 107771 / KB740</strain>
    </source>
</reference>
<reference key="2">
    <citation type="journal article" date="1998" name="Eur. J. Biochem.">
        <title>Phenylglyoxylate:NAD+ oxidoreductase (CoA benzoylating), a new enzyme of anaerobic phenylalanine metabolism in the denitrifying bacterium Azoarcus evansii.</title>
        <authorList>
            <person name="Hirsch W."/>
            <person name="Schagger H."/>
            <person name="Fuchs G."/>
        </authorList>
    </citation>
    <scope>PROTEIN SEQUENCE OF 14-25</scope>
    <scope>FUNCTION AS A PHENYLGLYOXYLATE DEHYDROGENASE</scope>
    <scope>CATALYTIC ACTIVITY</scope>
    <scope>BIOPHYSICOCHEMICAL PROPERTIES</scope>
    <scope>ACTIVITY REGULATION</scope>
    <scope>SUBSTRATE SPECIFICITY</scope>
    <scope>SUBUNIT</scope>
    <scope>INDUCTION</scope>
    <source>
        <strain>DSM 6898 / NBRC 107771 / KB740</strain>
    </source>
</reference>
<accession>Q8L3B1</accession>
<evidence type="ECO:0000269" key="1">
    <source>
    </source>
</evidence>
<sequence length="417" mass="45124">MSTATLEKAVAAKAPRKQKVILAEGNEAAALGVALARPDMVSVYPITPQSSLVEHVAKLIADGRMDADIVDAEGEHSVLSVLQGGALAGARTYTATCGPGLAFMFEPYFRTSGMRLPIVLTIVTRDGITPQSVWGGHQDAMTVREAGWIQVYCESVQEVLDTTVMAFKIAEHHDVMLPVNVCLDGNYLSYGASRVELPDQAVVDEFMGEKNVNWHVALDPLRPMAVDPLTGGTTGKGPQTFVRYRKGQCRGMQNALSVIEEVHADWAKRIGRSFAPLVEEYRLDDAEFAIMTLGSMTGAAKDAVDEAREAGKKIGLIKIKTFSPFPVEALKKALGKVKALGVIDRSVGFRWNCGPMYQETLGVLYRLGRHIPSISYIGGLAGADITIPHVHRVIDETEALLNGAVAPTEPVWLNEKD</sequence>
<dbReference type="EC" id="1.2.1.58"/>
<dbReference type="EMBL" id="AJ428571">
    <property type="protein sequence ID" value="CAD21691.1"/>
    <property type="molecule type" value="Genomic_DNA"/>
</dbReference>
<dbReference type="SMR" id="Q8L3B1"/>
<dbReference type="KEGG" id="ag:CAD21691"/>
<dbReference type="BioCyc" id="MetaCyc:MONOMER-124223"/>
<dbReference type="GO" id="GO:0051287">
    <property type="term" value="F:NAD binding"/>
    <property type="evidence" value="ECO:0000314"/>
    <property type="project" value="UniProtKB"/>
</dbReference>
<dbReference type="GO" id="GO:0047110">
    <property type="term" value="F:phenylglyoxylate dehydrogenase (acylating) activity"/>
    <property type="evidence" value="ECO:0000314"/>
    <property type="project" value="UniProtKB"/>
</dbReference>
<dbReference type="GO" id="GO:0006558">
    <property type="term" value="P:L-phenylalanine metabolic process"/>
    <property type="evidence" value="ECO:0000314"/>
    <property type="project" value="UniProtKB"/>
</dbReference>
<dbReference type="GO" id="GO:0006979">
    <property type="term" value="P:response to oxidative stress"/>
    <property type="evidence" value="ECO:0007669"/>
    <property type="project" value="TreeGrafter"/>
</dbReference>
<dbReference type="CDD" id="cd07034">
    <property type="entry name" value="TPP_PYR_PFOR_IOR-alpha_like"/>
    <property type="match status" value="1"/>
</dbReference>
<dbReference type="FunFam" id="3.40.50.920:FF:000010">
    <property type="entry name" value="Pyruvate ferredoxin oxidoreductase, alpha subunit"/>
    <property type="match status" value="1"/>
</dbReference>
<dbReference type="FunFam" id="3.40.50.970:FF:000012">
    <property type="entry name" value="Pyruvate:ferredoxin (Flavodoxin) oxidoreductase"/>
    <property type="match status" value="1"/>
</dbReference>
<dbReference type="Gene3D" id="3.40.50.920">
    <property type="match status" value="1"/>
</dbReference>
<dbReference type="Gene3D" id="3.40.50.970">
    <property type="match status" value="1"/>
</dbReference>
<dbReference type="InterPro" id="IPR054807">
    <property type="entry name" value="PadG"/>
</dbReference>
<dbReference type="InterPro" id="IPR033412">
    <property type="entry name" value="PFOR_II"/>
</dbReference>
<dbReference type="InterPro" id="IPR050722">
    <property type="entry name" value="Pyruvate:ferred/Flavod_OxRd"/>
</dbReference>
<dbReference type="InterPro" id="IPR002880">
    <property type="entry name" value="Pyrv_Fd/Flavodoxin_OxRdtase_N"/>
</dbReference>
<dbReference type="InterPro" id="IPR029061">
    <property type="entry name" value="THDP-binding"/>
</dbReference>
<dbReference type="InterPro" id="IPR009014">
    <property type="entry name" value="Transketo_C/PFOR_II"/>
</dbReference>
<dbReference type="NCBIfam" id="NF045764">
    <property type="entry name" value="PhenlGlyoxDHPadG"/>
    <property type="match status" value="1"/>
</dbReference>
<dbReference type="PANTHER" id="PTHR32154">
    <property type="entry name" value="PYRUVATE-FLAVODOXIN OXIDOREDUCTASE-RELATED"/>
    <property type="match status" value="1"/>
</dbReference>
<dbReference type="PANTHER" id="PTHR32154:SF0">
    <property type="entry name" value="PYRUVATE-FLAVODOXIN OXIDOREDUCTASE-RELATED"/>
    <property type="match status" value="1"/>
</dbReference>
<dbReference type="Pfam" id="PF17147">
    <property type="entry name" value="PFOR_II"/>
    <property type="match status" value="1"/>
</dbReference>
<dbReference type="Pfam" id="PF01855">
    <property type="entry name" value="POR_N"/>
    <property type="match status" value="1"/>
</dbReference>
<dbReference type="SUPFAM" id="SSF52518">
    <property type="entry name" value="Thiamin diphosphate-binding fold (THDP-binding)"/>
    <property type="match status" value="1"/>
</dbReference>
<dbReference type="SUPFAM" id="SSF52922">
    <property type="entry name" value="TK C-terminal domain-like"/>
    <property type="match status" value="1"/>
</dbReference>
<organism>
    <name type="scientific">Aromatoleum evansii</name>
    <name type="common">Azoarcus evansii</name>
    <dbReference type="NCBI Taxonomy" id="59406"/>
    <lineage>
        <taxon>Bacteria</taxon>
        <taxon>Pseudomonadati</taxon>
        <taxon>Pseudomonadota</taxon>
        <taxon>Betaproteobacteria</taxon>
        <taxon>Rhodocyclales</taxon>
        <taxon>Rhodocyclaceae</taxon>
        <taxon>Aromatoleum</taxon>
    </lineage>
</organism>